<sequence>MSNKIINLGSIEIANDKPFVLFGGMNVLESRDLAMSIAETYAEVTQKLGIPYVFKASFDKANRSSINSYRGPGMEEGLKIFEEIKKTFNLPLITDVHEVHQCAPVAEVVDIIQLPAFLARQTDLVVAMAKTGTIINVKKPQFLAPHEMRHIITKFNEAGNDEIILCERGSSFGYNNLVVDMLGMDEMKQSGYPVIFDATHALQRPGGRADSAGGRRAQAAELARSGMALGLAGLFIEAHPDPDNAKCDGPCALPLHQLENYLKQMKAIDDLVKSFDPIDTSK</sequence>
<evidence type="ECO:0000255" key="1">
    <source>
        <dbReference type="HAMAP-Rule" id="MF_00056"/>
    </source>
</evidence>
<protein>
    <recommendedName>
        <fullName evidence="1">2-dehydro-3-deoxyphosphooctonate aldolase</fullName>
        <ecNumber evidence="1">2.5.1.55</ecNumber>
    </recommendedName>
    <alternativeName>
        <fullName evidence="1">3-deoxy-D-manno-octulosonic acid 8-phosphate synthase</fullName>
    </alternativeName>
    <alternativeName>
        <fullName evidence="1">KDO-8-phosphate synthase</fullName>
        <shortName evidence="1">KDO 8-P synthase</shortName>
        <shortName evidence="1">KDOPS</shortName>
    </alternativeName>
    <alternativeName>
        <fullName evidence="1">Phospho-2-dehydro-3-deoxyoctonate aldolase</fullName>
    </alternativeName>
</protein>
<proteinExistence type="inferred from homology"/>
<reference key="1">
    <citation type="submission" date="2007-07" db="EMBL/GenBank/DDBJ databases">
        <title>Complete sequence of chromosome of Shewanella baltica OS185.</title>
        <authorList>
            <consortium name="US DOE Joint Genome Institute"/>
            <person name="Copeland A."/>
            <person name="Lucas S."/>
            <person name="Lapidus A."/>
            <person name="Barry K."/>
            <person name="Glavina del Rio T."/>
            <person name="Dalin E."/>
            <person name="Tice H."/>
            <person name="Pitluck S."/>
            <person name="Sims D."/>
            <person name="Brettin T."/>
            <person name="Bruce D."/>
            <person name="Detter J.C."/>
            <person name="Han C."/>
            <person name="Schmutz J."/>
            <person name="Larimer F."/>
            <person name="Land M."/>
            <person name="Hauser L."/>
            <person name="Kyrpides N."/>
            <person name="Mikhailova N."/>
            <person name="Brettar I."/>
            <person name="Rodrigues J."/>
            <person name="Konstantinidis K."/>
            <person name="Tiedje J."/>
            <person name="Richardson P."/>
        </authorList>
    </citation>
    <scope>NUCLEOTIDE SEQUENCE [LARGE SCALE GENOMIC DNA]</scope>
    <source>
        <strain>OS185</strain>
    </source>
</reference>
<organism>
    <name type="scientific">Shewanella baltica (strain OS185)</name>
    <dbReference type="NCBI Taxonomy" id="402882"/>
    <lineage>
        <taxon>Bacteria</taxon>
        <taxon>Pseudomonadati</taxon>
        <taxon>Pseudomonadota</taxon>
        <taxon>Gammaproteobacteria</taxon>
        <taxon>Alteromonadales</taxon>
        <taxon>Shewanellaceae</taxon>
        <taxon>Shewanella</taxon>
    </lineage>
</organism>
<keyword id="KW-0963">Cytoplasm</keyword>
<keyword id="KW-0448">Lipopolysaccharide biosynthesis</keyword>
<keyword id="KW-0808">Transferase</keyword>
<name>KDSA_SHEB8</name>
<feature type="chain" id="PRO_1000003349" description="2-dehydro-3-deoxyphosphooctonate aldolase">
    <location>
        <begin position="1"/>
        <end position="282"/>
    </location>
</feature>
<dbReference type="EC" id="2.5.1.55" evidence="1"/>
<dbReference type="EMBL" id="CP000753">
    <property type="protein sequence ID" value="ABS09733.1"/>
    <property type="molecule type" value="Genomic_DNA"/>
</dbReference>
<dbReference type="RefSeq" id="WP_012090148.1">
    <property type="nucleotide sequence ID" value="NC_009665.1"/>
</dbReference>
<dbReference type="SMR" id="A6WSE4"/>
<dbReference type="KEGG" id="sbm:Shew185_3608"/>
<dbReference type="HOGENOM" id="CLU_036666_0_0_6"/>
<dbReference type="UniPathway" id="UPA00030"/>
<dbReference type="UniPathway" id="UPA00357">
    <property type="reaction ID" value="UER00474"/>
</dbReference>
<dbReference type="GO" id="GO:0005737">
    <property type="term" value="C:cytoplasm"/>
    <property type="evidence" value="ECO:0007669"/>
    <property type="project" value="UniProtKB-SubCell"/>
</dbReference>
<dbReference type="GO" id="GO:0008676">
    <property type="term" value="F:3-deoxy-8-phosphooctulonate synthase activity"/>
    <property type="evidence" value="ECO:0007669"/>
    <property type="project" value="UniProtKB-UniRule"/>
</dbReference>
<dbReference type="GO" id="GO:0019294">
    <property type="term" value="P:keto-3-deoxy-D-manno-octulosonic acid biosynthetic process"/>
    <property type="evidence" value="ECO:0007669"/>
    <property type="project" value="UniProtKB-UniRule"/>
</dbReference>
<dbReference type="Gene3D" id="3.20.20.70">
    <property type="entry name" value="Aldolase class I"/>
    <property type="match status" value="1"/>
</dbReference>
<dbReference type="HAMAP" id="MF_00056">
    <property type="entry name" value="KDO8P_synth"/>
    <property type="match status" value="1"/>
</dbReference>
<dbReference type="InterPro" id="IPR013785">
    <property type="entry name" value="Aldolase_TIM"/>
</dbReference>
<dbReference type="InterPro" id="IPR006218">
    <property type="entry name" value="DAHP1/KDSA"/>
</dbReference>
<dbReference type="InterPro" id="IPR006269">
    <property type="entry name" value="KDO8P_synthase"/>
</dbReference>
<dbReference type="NCBIfam" id="TIGR01362">
    <property type="entry name" value="KDO8P_synth"/>
    <property type="match status" value="1"/>
</dbReference>
<dbReference type="NCBIfam" id="NF003543">
    <property type="entry name" value="PRK05198.1"/>
    <property type="match status" value="1"/>
</dbReference>
<dbReference type="NCBIfam" id="NF009109">
    <property type="entry name" value="PRK12457.1"/>
    <property type="match status" value="1"/>
</dbReference>
<dbReference type="PANTHER" id="PTHR21057">
    <property type="entry name" value="PHOSPHO-2-DEHYDRO-3-DEOXYHEPTONATE ALDOLASE"/>
    <property type="match status" value="1"/>
</dbReference>
<dbReference type="Pfam" id="PF00793">
    <property type="entry name" value="DAHP_synth_1"/>
    <property type="match status" value="1"/>
</dbReference>
<dbReference type="SUPFAM" id="SSF51569">
    <property type="entry name" value="Aldolase"/>
    <property type="match status" value="1"/>
</dbReference>
<accession>A6WSE4</accession>
<gene>
    <name evidence="1" type="primary">kdsA</name>
    <name type="ordered locus">Shew185_3608</name>
</gene>
<comment type="catalytic activity">
    <reaction evidence="1">
        <text>D-arabinose 5-phosphate + phosphoenolpyruvate + H2O = 3-deoxy-alpha-D-manno-2-octulosonate-8-phosphate + phosphate</text>
        <dbReference type="Rhea" id="RHEA:14053"/>
        <dbReference type="ChEBI" id="CHEBI:15377"/>
        <dbReference type="ChEBI" id="CHEBI:43474"/>
        <dbReference type="ChEBI" id="CHEBI:57693"/>
        <dbReference type="ChEBI" id="CHEBI:58702"/>
        <dbReference type="ChEBI" id="CHEBI:85985"/>
        <dbReference type="EC" id="2.5.1.55"/>
    </reaction>
</comment>
<comment type="pathway">
    <text evidence="1">Carbohydrate biosynthesis; 3-deoxy-D-manno-octulosonate biosynthesis; 3-deoxy-D-manno-octulosonate from D-ribulose 5-phosphate: step 2/3.</text>
</comment>
<comment type="pathway">
    <text evidence="1">Bacterial outer membrane biogenesis; lipopolysaccharide biosynthesis.</text>
</comment>
<comment type="subcellular location">
    <subcellularLocation>
        <location evidence="1">Cytoplasm</location>
    </subcellularLocation>
</comment>
<comment type="similarity">
    <text evidence="1">Belongs to the KdsA family.</text>
</comment>